<keyword id="KW-1185">Reference proteome</keyword>
<keyword id="KW-0687">Ribonucleoprotein</keyword>
<keyword id="KW-0689">Ribosomal protein</keyword>
<keyword id="KW-0694">RNA-binding</keyword>
<keyword id="KW-0699">rRNA-binding</keyword>
<reference key="1">
    <citation type="submission" date="2007-11" db="EMBL/GenBank/DDBJ databases">
        <title>Complete sequence of Delftia acidovorans DSM 14801 / SPH-1.</title>
        <authorList>
            <person name="Copeland A."/>
            <person name="Lucas S."/>
            <person name="Lapidus A."/>
            <person name="Barry K."/>
            <person name="Glavina del Rio T."/>
            <person name="Dalin E."/>
            <person name="Tice H."/>
            <person name="Pitluck S."/>
            <person name="Lowry S."/>
            <person name="Clum A."/>
            <person name="Schmutz J."/>
            <person name="Larimer F."/>
            <person name="Land M."/>
            <person name="Hauser L."/>
            <person name="Kyrpides N."/>
            <person name="Kim E."/>
            <person name="Schleheck D."/>
            <person name="Richardson P."/>
        </authorList>
    </citation>
    <scope>NUCLEOTIDE SEQUENCE [LARGE SCALE GENOMIC DNA]</scope>
    <source>
        <strain>DSM 14801 / SPH-1</strain>
    </source>
</reference>
<comment type="function">
    <text evidence="1">One of two assembly initiator proteins, it binds directly to the 5'-end of the 23S rRNA, where it nucleates assembly of the 50S subunit.</text>
</comment>
<comment type="function">
    <text evidence="1">One of the proteins that surrounds the polypeptide exit tunnel on the outside of the subunit.</text>
</comment>
<comment type="subunit">
    <text evidence="1">Part of the 50S ribosomal subunit.</text>
</comment>
<comment type="similarity">
    <text evidence="1">Belongs to the universal ribosomal protein uL24 family.</text>
</comment>
<feature type="chain" id="PRO_1000141987" description="Large ribosomal subunit protein uL24">
    <location>
        <begin position="1"/>
        <end position="106"/>
    </location>
</feature>
<gene>
    <name evidence="1" type="primary">rplX</name>
    <name type="ordered locus">Daci_1033</name>
</gene>
<sequence length="106" mass="11316">MNKIRKGDQIIVLTGRDKGKQGVVSARKDDSHLLIDGINMVKKHVKPNPMKGTTGGIVEKAMPIHQSNVAIFNAATGKADRVGIKVQADGTRVRVFKSSGAEIKAA</sequence>
<dbReference type="EMBL" id="CP000884">
    <property type="protein sequence ID" value="ABX33679.1"/>
    <property type="molecule type" value="Genomic_DNA"/>
</dbReference>
<dbReference type="RefSeq" id="WP_012202965.1">
    <property type="nucleotide sequence ID" value="NC_010002.1"/>
</dbReference>
<dbReference type="SMR" id="A9BRW2"/>
<dbReference type="STRING" id="398578.Daci_1033"/>
<dbReference type="GeneID" id="24115516"/>
<dbReference type="KEGG" id="dac:Daci_1033"/>
<dbReference type="eggNOG" id="COG0198">
    <property type="taxonomic scope" value="Bacteria"/>
</dbReference>
<dbReference type="HOGENOM" id="CLU_093315_2_2_4"/>
<dbReference type="Proteomes" id="UP000000784">
    <property type="component" value="Chromosome"/>
</dbReference>
<dbReference type="GO" id="GO:1990904">
    <property type="term" value="C:ribonucleoprotein complex"/>
    <property type="evidence" value="ECO:0007669"/>
    <property type="project" value="UniProtKB-KW"/>
</dbReference>
<dbReference type="GO" id="GO:0005840">
    <property type="term" value="C:ribosome"/>
    <property type="evidence" value="ECO:0007669"/>
    <property type="project" value="UniProtKB-KW"/>
</dbReference>
<dbReference type="GO" id="GO:0019843">
    <property type="term" value="F:rRNA binding"/>
    <property type="evidence" value="ECO:0007669"/>
    <property type="project" value="UniProtKB-UniRule"/>
</dbReference>
<dbReference type="GO" id="GO:0003735">
    <property type="term" value="F:structural constituent of ribosome"/>
    <property type="evidence" value="ECO:0007669"/>
    <property type="project" value="InterPro"/>
</dbReference>
<dbReference type="GO" id="GO:0006412">
    <property type="term" value="P:translation"/>
    <property type="evidence" value="ECO:0007669"/>
    <property type="project" value="UniProtKB-UniRule"/>
</dbReference>
<dbReference type="CDD" id="cd06089">
    <property type="entry name" value="KOW_RPL26"/>
    <property type="match status" value="1"/>
</dbReference>
<dbReference type="FunFam" id="2.30.30.30:FF:000004">
    <property type="entry name" value="50S ribosomal protein L24"/>
    <property type="match status" value="1"/>
</dbReference>
<dbReference type="Gene3D" id="2.30.30.30">
    <property type="match status" value="1"/>
</dbReference>
<dbReference type="HAMAP" id="MF_01326_B">
    <property type="entry name" value="Ribosomal_uL24_B"/>
    <property type="match status" value="1"/>
</dbReference>
<dbReference type="InterPro" id="IPR005824">
    <property type="entry name" value="KOW"/>
</dbReference>
<dbReference type="InterPro" id="IPR014722">
    <property type="entry name" value="Rib_uL2_dom2"/>
</dbReference>
<dbReference type="InterPro" id="IPR003256">
    <property type="entry name" value="Ribosomal_uL24"/>
</dbReference>
<dbReference type="InterPro" id="IPR005825">
    <property type="entry name" value="Ribosomal_uL24_CS"/>
</dbReference>
<dbReference type="InterPro" id="IPR041988">
    <property type="entry name" value="Ribosomal_uL24_KOW"/>
</dbReference>
<dbReference type="InterPro" id="IPR008991">
    <property type="entry name" value="Translation_prot_SH3-like_sf"/>
</dbReference>
<dbReference type="NCBIfam" id="TIGR01079">
    <property type="entry name" value="rplX_bact"/>
    <property type="match status" value="1"/>
</dbReference>
<dbReference type="PANTHER" id="PTHR12903">
    <property type="entry name" value="MITOCHONDRIAL RIBOSOMAL PROTEIN L24"/>
    <property type="match status" value="1"/>
</dbReference>
<dbReference type="Pfam" id="PF00467">
    <property type="entry name" value="KOW"/>
    <property type="match status" value="1"/>
</dbReference>
<dbReference type="Pfam" id="PF17136">
    <property type="entry name" value="ribosomal_L24"/>
    <property type="match status" value="1"/>
</dbReference>
<dbReference type="SMART" id="SM00739">
    <property type="entry name" value="KOW"/>
    <property type="match status" value="1"/>
</dbReference>
<dbReference type="SUPFAM" id="SSF50104">
    <property type="entry name" value="Translation proteins SH3-like domain"/>
    <property type="match status" value="1"/>
</dbReference>
<dbReference type="PROSITE" id="PS01108">
    <property type="entry name" value="RIBOSOMAL_L24"/>
    <property type="match status" value="1"/>
</dbReference>
<name>RL24_DELAS</name>
<organism>
    <name type="scientific">Delftia acidovorans (strain DSM 14801 / SPH-1)</name>
    <dbReference type="NCBI Taxonomy" id="398578"/>
    <lineage>
        <taxon>Bacteria</taxon>
        <taxon>Pseudomonadati</taxon>
        <taxon>Pseudomonadota</taxon>
        <taxon>Betaproteobacteria</taxon>
        <taxon>Burkholderiales</taxon>
        <taxon>Comamonadaceae</taxon>
        <taxon>Delftia</taxon>
    </lineage>
</organism>
<protein>
    <recommendedName>
        <fullName evidence="1">Large ribosomal subunit protein uL24</fullName>
    </recommendedName>
    <alternativeName>
        <fullName evidence="2">50S ribosomal protein L24</fullName>
    </alternativeName>
</protein>
<evidence type="ECO:0000255" key="1">
    <source>
        <dbReference type="HAMAP-Rule" id="MF_01326"/>
    </source>
</evidence>
<evidence type="ECO:0000305" key="2"/>
<accession>A9BRW2</accession>
<proteinExistence type="inferred from homology"/>